<gene>
    <name evidence="1" type="primary">mtaD</name>
    <name type="ordered locus">DICTH_0781</name>
</gene>
<protein>
    <recommendedName>
        <fullName evidence="1">5-methylthioadenosine/S-adenosylhomocysteine deaminase</fullName>
        <shortName evidence="1">MTA/SAH deaminase</shortName>
        <ecNumber evidence="1">3.5.4.28</ecNumber>
        <ecNumber evidence="1">3.5.4.31</ecNumber>
    </recommendedName>
</protein>
<accession>B5YDN9</accession>
<reference key="1">
    <citation type="journal article" date="2014" name="Genome Announc.">
        <title>Complete Genome Sequence of the Extreme Thermophile Dictyoglomus thermophilum H-6-12.</title>
        <authorList>
            <person name="Coil D.A."/>
            <person name="Badger J.H."/>
            <person name="Forberger H.C."/>
            <person name="Riggs F."/>
            <person name="Madupu R."/>
            <person name="Fedorova N."/>
            <person name="Ward N."/>
            <person name="Robb F.T."/>
            <person name="Eisen J.A."/>
        </authorList>
    </citation>
    <scope>NUCLEOTIDE SEQUENCE [LARGE SCALE GENOMIC DNA]</scope>
    <source>
        <strain>ATCC 35947 / DSM 3960 / H-6-12</strain>
    </source>
</reference>
<feature type="chain" id="PRO_1000140350" description="5-methylthioadenosine/S-adenosylhomocysteine deaminase">
    <location>
        <begin position="1"/>
        <end position="426"/>
    </location>
</feature>
<feature type="binding site" evidence="1">
    <location>
        <position position="60"/>
    </location>
    <ligand>
        <name>Zn(2+)</name>
        <dbReference type="ChEBI" id="CHEBI:29105"/>
    </ligand>
</feature>
<feature type="binding site" evidence="1">
    <location>
        <position position="62"/>
    </location>
    <ligand>
        <name>Zn(2+)</name>
        <dbReference type="ChEBI" id="CHEBI:29105"/>
    </ligand>
</feature>
<feature type="binding site" evidence="1">
    <location>
        <position position="89"/>
    </location>
    <ligand>
        <name>substrate</name>
    </ligand>
</feature>
<feature type="binding site" evidence="1">
    <location>
        <position position="179"/>
    </location>
    <ligand>
        <name>substrate</name>
    </ligand>
</feature>
<feature type="binding site" evidence="1">
    <location>
        <position position="206"/>
    </location>
    <ligand>
        <name>Zn(2+)</name>
        <dbReference type="ChEBI" id="CHEBI:29105"/>
    </ligand>
</feature>
<feature type="binding site" evidence="1">
    <location>
        <position position="209"/>
    </location>
    <ligand>
        <name>substrate</name>
    </ligand>
</feature>
<feature type="binding site" evidence="1">
    <location>
        <position position="294"/>
    </location>
    <ligand>
        <name>substrate</name>
    </ligand>
</feature>
<feature type="binding site" evidence="1">
    <location>
        <position position="294"/>
    </location>
    <ligand>
        <name>Zn(2+)</name>
        <dbReference type="ChEBI" id="CHEBI:29105"/>
    </ligand>
</feature>
<comment type="function">
    <text evidence="1">Catalyzes the deamination of 5-methylthioadenosine and S-adenosyl-L-homocysteine into 5-methylthioinosine and S-inosyl-L-homocysteine, respectively. Is also able to deaminate adenosine.</text>
</comment>
<comment type="catalytic activity">
    <reaction evidence="1">
        <text>S-adenosyl-L-homocysteine + H2O + H(+) = S-inosyl-L-homocysteine + NH4(+)</text>
        <dbReference type="Rhea" id="RHEA:20716"/>
        <dbReference type="ChEBI" id="CHEBI:15377"/>
        <dbReference type="ChEBI" id="CHEBI:15378"/>
        <dbReference type="ChEBI" id="CHEBI:28938"/>
        <dbReference type="ChEBI" id="CHEBI:57856"/>
        <dbReference type="ChEBI" id="CHEBI:57985"/>
        <dbReference type="EC" id="3.5.4.28"/>
    </reaction>
</comment>
<comment type="catalytic activity">
    <reaction evidence="1">
        <text>S-methyl-5'-thioadenosine + H2O + H(+) = S-methyl-5'-thioinosine + NH4(+)</text>
        <dbReference type="Rhea" id="RHEA:25025"/>
        <dbReference type="ChEBI" id="CHEBI:15377"/>
        <dbReference type="ChEBI" id="CHEBI:15378"/>
        <dbReference type="ChEBI" id="CHEBI:17509"/>
        <dbReference type="ChEBI" id="CHEBI:28938"/>
        <dbReference type="ChEBI" id="CHEBI:48595"/>
        <dbReference type="EC" id="3.5.4.31"/>
    </reaction>
</comment>
<comment type="cofactor">
    <cofactor evidence="1">
        <name>Zn(2+)</name>
        <dbReference type="ChEBI" id="CHEBI:29105"/>
    </cofactor>
    <text evidence="1">Binds 1 zinc ion per subunit.</text>
</comment>
<comment type="similarity">
    <text evidence="1">Belongs to the metallo-dependent hydrolases superfamily. MTA/SAH deaminase family.</text>
</comment>
<organism>
    <name type="scientific">Dictyoglomus thermophilum (strain ATCC 35947 / DSM 3960 / H-6-12)</name>
    <dbReference type="NCBI Taxonomy" id="309799"/>
    <lineage>
        <taxon>Bacteria</taxon>
        <taxon>Pseudomonadati</taxon>
        <taxon>Dictyoglomota</taxon>
        <taxon>Dictyoglomia</taxon>
        <taxon>Dictyoglomales</taxon>
        <taxon>Dictyoglomaceae</taxon>
        <taxon>Dictyoglomus</taxon>
    </lineage>
</organism>
<name>MTAD_DICT6</name>
<proteinExistence type="inferred from homology"/>
<keyword id="KW-0378">Hydrolase</keyword>
<keyword id="KW-0479">Metal-binding</keyword>
<keyword id="KW-0862">Zinc</keyword>
<sequence>MRILIEDVNILIDDKIVENKNILIENDIIKQISDSKSFERIDYIIDGKNKIALPGLVNTHTHLAMTLFRGFADDLPLEEWLEEKIWPQEAKLTADDVYWGSLLGICEMIRGGTIAFSDMYFFMDEMAKAVAESGIKASLSVGMIGIAGDENETLNRGVSFAKNWHNAEDGRIRVMLGPHAPYTCPPSFLEKVIDKAIEMSLGIHTHLSETYLEVENIKNMYGLTPIRLMDRVGLFNVPVLAAHCVFVDDEEIEILSEKGVGVAHNPQSNLKLASGVAPVKKMLEKGVKVGLGTDGPASNNNLDMWEEIRLVATLHKGVERDPICVPARDALIMATKNGMEILGFENSGIIKEGYKADLILVDVNKPHFYPRHNLVSHLVYSASSSDVDTVIVDGRILMEKRELKTLDEEKIMYEAEKRAFELIKKS</sequence>
<dbReference type="EC" id="3.5.4.28" evidence="1"/>
<dbReference type="EC" id="3.5.4.31" evidence="1"/>
<dbReference type="EMBL" id="CP001146">
    <property type="protein sequence ID" value="ACI19265.1"/>
    <property type="molecule type" value="Genomic_DNA"/>
</dbReference>
<dbReference type="RefSeq" id="WP_012547897.1">
    <property type="nucleotide sequence ID" value="NC_011297.1"/>
</dbReference>
<dbReference type="SMR" id="B5YDN9"/>
<dbReference type="STRING" id="309799.DICTH_0781"/>
<dbReference type="PaxDb" id="309799-DICTH_0781"/>
<dbReference type="KEGG" id="dth:DICTH_0781"/>
<dbReference type="eggNOG" id="COG0402">
    <property type="taxonomic scope" value="Bacteria"/>
</dbReference>
<dbReference type="HOGENOM" id="CLU_012358_2_1_0"/>
<dbReference type="OrthoDB" id="9807210at2"/>
<dbReference type="Proteomes" id="UP000001733">
    <property type="component" value="Chromosome"/>
</dbReference>
<dbReference type="GO" id="GO:0090614">
    <property type="term" value="F:5'-methylthioadenosine deaminase activity"/>
    <property type="evidence" value="ECO:0007669"/>
    <property type="project" value="UniProtKB-UniRule"/>
</dbReference>
<dbReference type="GO" id="GO:0046872">
    <property type="term" value="F:metal ion binding"/>
    <property type="evidence" value="ECO:0007669"/>
    <property type="project" value="UniProtKB-KW"/>
</dbReference>
<dbReference type="GO" id="GO:0050270">
    <property type="term" value="F:S-adenosylhomocysteine deaminase activity"/>
    <property type="evidence" value="ECO:0007669"/>
    <property type="project" value="UniProtKB-UniRule"/>
</dbReference>
<dbReference type="CDD" id="cd01298">
    <property type="entry name" value="ATZ_TRZ_like"/>
    <property type="match status" value="1"/>
</dbReference>
<dbReference type="FunFam" id="3.20.20.140:FF:000014">
    <property type="entry name" value="5-methylthioadenosine/S-adenosylhomocysteine deaminase"/>
    <property type="match status" value="1"/>
</dbReference>
<dbReference type="Gene3D" id="3.20.20.140">
    <property type="entry name" value="Metal-dependent hydrolases"/>
    <property type="match status" value="1"/>
</dbReference>
<dbReference type="Gene3D" id="2.30.40.10">
    <property type="entry name" value="Urease, subunit C, domain 1"/>
    <property type="match status" value="1"/>
</dbReference>
<dbReference type="HAMAP" id="MF_01281">
    <property type="entry name" value="MTA_SAH_deamin"/>
    <property type="match status" value="1"/>
</dbReference>
<dbReference type="InterPro" id="IPR006680">
    <property type="entry name" value="Amidohydro-rel"/>
</dbReference>
<dbReference type="InterPro" id="IPR023512">
    <property type="entry name" value="Deaminase_MtaD/DadD"/>
</dbReference>
<dbReference type="InterPro" id="IPR011059">
    <property type="entry name" value="Metal-dep_hydrolase_composite"/>
</dbReference>
<dbReference type="InterPro" id="IPR032466">
    <property type="entry name" value="Metal_Hydrolase"/>
</dbReference>
<dbReference type="InterPro" id="IPR050287">
    <property type="entry name" value="MTA/SAH_deaminase"/>
</dbReference>
<dbReference type="PANTHER" id="PTHR43794:SF11">
    <property type="entry name" value="AMIDOHYDROLASE-RELATED DOMAIN-CONTAINING PROTEIN"/>
    <property type="match status" value="1"/>
</dbReference>
<dbReference type="PANTHER" id="PTHR43794">
    <property type="entry name" value="AMINOHYDROLASE SSNA-RELATED"/>
    <property type="match status" value="1"/>
</dbReference>
<dbReference type="Pfam" id="PF01979">
    <property type="entry name" value="Amidohydro_1"/>
    <property type="match status" value="1"/>
</dbReference>
<dbReference type="SUPFAM" id="SSF51338">
    <property type="entry name" value="Composite domain of metallo-dependent hydrolases"/>
    <property type="match status" value="1"/>
</dbReference>
<dbReference type="SUPFAM" id="SSF51556">
    <property type="entry name" value="Metallo-dependent hydrolases"/>
    <property type="match status" value="1"/>
</dbReference>
<evidence type="ECO:0000255" key="1">
    <source>
        <dbReference type="HAMAP-Rule" id="MF_01281"/>
    </source>
</evidence>